<sequence>MQNYSRTDFAQVGTTNRGCMRVIPSDKEKEHDLIVVGGQNGSLICLSRKSNDTTIIFKTQPGYPVQSLALGGPASSKKKDKIFVASQNTVRGVNRKGKTFFSMETNMAEVANRMFVRGLDVVLTGRKSYSRYHDTVDSNSYLCTEDIHDVVSLVFEEAWGSREYTSILACGNSTLQIIEGNNFAYDVRLDSVPFTVSLFMGDGGHTKLLVLYGTKTGRLGLVSVPQGGGKILWEIDTTSGACVTTIVCFNVTGGQFPDIIVGKEDGLIEIYVIDETDHAHLFGTFSCDESITGISCGHVSSKSEIDIIICTFTGWLFSLAKTSRPMIENLPVAANFSVKMQQLRSEVEELQTKVNEERLRYEEITKRQGSGTGSTFFHSFQVHENFEYSAAHGAYNLTIELVIPIDFVVVQSQLPIRLMEVEKNASVVSEVRQDALNPWPLLASYRCQANVCRLELRVQANEGDSGVINLYVCPKVMPKCAQITTHYIKALSSHMRSHDFDLYRPMNTLQFTGNFSIAEAHAWLHNLLPNVPSKCPPADTITNNYQCSVNGGTQLQVVYSKGSAVFRSDCMTTICIIRDKVSEQTMKMQIRVEVACELNQDSVNHCLKLIDPKITSMLNIEKNKLYAAALKELESNNDDVFSFLSAANAKILKDHDAIYEKSEGVSIEDSGVLAILENLMVARGKLTGRSSKGRGDAIRDLISTDYSLENMQTLFKNAMND</sequence>
<accession>Q9XW70</accession>
<comment type="function">
    <text evidence="1 3 4 5 6 7 9 10">Component of the BBSome complex (By similarity). The BBSome complex is thought to function as a coat complex required for sorting of specific membrane proteins to the primary cilia (By similarity). The BBSome complex is required for ciliogenesis but is dispensable for centriolar satellite function (By similarity). Required for proper BBSome complex assembly and its ciliary localization (By similarity). Required for cilia biogenesis and both the assembly and movement of intraflagellar transport proteins along the ciliary axoneme (PubMed:15231740, PubMed:17000880, PubMed:22022287, PubMed:22922713, PubMed:26150102). Plays a role in the removal of degraded mechanosensory receptors within the cilia (PubMed:26150102). Plays a role in guanylyl cyclase localization in the ring-like structures at the base of the finger compartment in AFD sensory neurons (PubMed:25335890). In ciliated sensory neurons, required for the sensation of nitric oxide and avoidance of NO-producing organisms like P.aeruginosa (PubMed:30014846).</text>
</comment>
<comment type="subunit">
    <text evidence="1 6">Part of BBSome complex, that contains at least bbs-1, bbs-2, bbs-4, bbs-5, osm-12, bbs-8/ttc-8 and bbs-9 (By similarity). Interacts with bbs-1 (PubMed:22922713).</text>
</comment>
<comment type="subcellular location">
    <subcellularLocation>
        <location evidence="3">Cell projection</location>
        <location evidence="3">Cilium</location>
    </subcellularLocation>
    <subcellularLocation>
        <location evidence="3">Cytoplasm</location>
        <location evidence="3">Cytoskeleton</location>
        <location evidence="3">Cilium basal body</location>
    </subcellularLocation>
    <subcellularLocation>
        <location evidence="3">Cytoplasm</location>
        <location evidence="3">Cytoskeleton</location>
        <location evidence="3">Cilium axoneme</location>
    </subcellularLocation>
    <text evidence="3">Moves in anterograde and retrograde directions along the ciliary axonemes.</text>
</comment>
<comment type="tissue specificity">
    <text evidence="2 3">Expressed in ciliated cells including amphid and both inner and outer labial neurons of the head and in both phasmid neurons PHA and PHB in the tail at larval stages L1 and L2.</text>
</comment>
<comment type="disruption phenotype">
    <text evidence="3 6 7 9">Mutants have normal body morphology, but with reduced body length and width, delayed larval development and decreased roaming movements (PubMed:22022287). May exhibit defective chemotaxis tendencies (PubMed:15231740). Defective cilia structure and function (PubMed:15231740, PubMed:22022287, PubMed:26150102). This is characterized by increased accumulation and mislocalization of intraflagellar transport proteins and impaired movement of intraflagellar transport proteins along the ciliary axoneme (PubMed:15231740, PubMed:22922713, PubMed:26150102). Defective polycystin-mediated cilia signaling and mislocalized and increased accumulation of mechanosensory receptors pkd-2, osm-9 and odr-10 within cilia (PubMed:26150102). Impaired localization of the guanylyl cyclase proteins, gcy-8, gcy-18 and gcy-23, within AFD sensory neurons, with accumulation along the dendrite as well as in the finger compartment of AFD neurons (PubMed:25335890).</text>
</comment>
<protein>
    <recommendedName>
        <fullName evidence="11">BBSome complex member bbs-7</fullName>
    </recommendedName>
    <alternativeName>
        <fullName evidence="1">Bardet-Biedl syndrome 7 protein homolog</fullName>
    </alternativeName>
    <alternativeName>
        <fullName evidence="13">Osmotic avoidance abnormal protein 12</fullName>
    </alternativeName>
</protein>
<reference evidence="12" key="1">
    <citation type="journal article" date="1998" name="Science">
        <title>Genome sequence of the nematode C. elegans: a platform for investigating biology.</title>
        <authorList>
            <consortium name="The C. elegans sequencing consortium"/>
        </authorList>
    </citation>
    <scope>NUCLEOTIDE SEQUENCE [LARGE SCALE GENOMIC DNA]</scope>
    <source>
        <strain evidence="12">Bristol N2</strain>
    </source>
</reference>
<reference evidence="11" key="2">
    <citation type="journal article" date="2003" name="Nature">
        <title>Basal body dysfunction is a likely cause of pleiotropic Bardet-Biedl syndrome.</title>
        <authorList>
            <person name="Ansley S.J."/>
            <person name="Badano J.L."/>
            <person name="Blacque O.E."/>
            <person name="Hill J."/>
            <person name="Hoskins B.E."/>
            <person name="Leitch C.C."/>
            <person name="Kim J.C."/>
            <person name="Ross A.J."/>
            <person name="Eichers E.R."/>
            <person name="Teslovich T.M."/>
            <person name="Mah A.K."/>
            <person name="Johnsen R.C."/>
            <person name="Cavender J.C."/>
            <person name="Lewis R.A."/>
            <person name="Leroux M.R."/>
            <person name="Beales P.L."/>
            <person name="Katsanis N."/>
        </authorList>
    </citation>
    <scope>TISSUE SPECIFICITY</scope>
</reference>
<reference evidence="11" key="3">
    <citation type="journal article" date="2004" name="Genes Dev.">
        <title>Loss of C. elegans BBS-7 and BBS-8 protein function results in cilia defects and compromised intraflagellar transport.</title>
        <authorList>
            <person name="Blacque O.E."/>
            <person name="Reardon M.J."/>
            <person name="Li C."/>
            <person name="McCarthy J."/>
            <person name="Mahjoub M.R."/>
            <person name="Ansley S.J."/>
            <person name="Badano J.L."/>
            <person name="Mah A.K."/>
            <person name="Beales P.L."/>
            <person name="Davidson W.S."/>
            <person name="Johnsen R.C."/>
            <person name="Audeh M."/>
            <person name="Plasterk R.H."/>
            <person name="Baillie D.L."/>
            <person name="Katsanis N."/>
            <person name="Quarmby L.M."/>
            <person name="Wicks S.R."/>
            <person name="Leroux M.R."/>
        </authorList>
    </citation>
    <scope>FUNCTION</scope>
    <scope>SUBCELLULAR LOCATION</scope>
    <scope>TISSUE SPECIFICITY</scope>
    <scope>DISRUPTION PHENOTYPE</scope>
</reference>
<reference key="4">
    <citation type="journal article" date="2006" name="J. Cell Biol.">
        <title>Mechanism of transport of IFT particles in C. elegans cilia by the concerted action of kinesin-II and OSM-3 motors.</title>
        <authorList>
            <person name="Pan X."/>
            <person name="Ou G."/>
            <person name="Civelekoglu-Scholey G."/>
            <person name="Blacque O.E."/>
            <person name="Endres N.F."/>
            <person name="Tao L."/>
            <person name="Mogilner A."/>
            <person name="Leroux M.R."/>
            <person name="Vale R.D."/>
            <person name="Scholey J.M."/>
        </authorList>
    </citation>
    <scope>FUNCTION</scope>
</reference>
<reference key="5">
    <citation type="journal article" date="2011" name="PLoS Genet.">
        <title>Mutations in a guanylate cyclase GCY-35/GCY-36 modify Bardet-Biedl syndrome-associated phenotypes in Caenorhabditis elegans.</title>
        <authorList>
            <person name="Mok C.A."/>
            <person name="Healey M.P."/>
            <person name="Shekhar T."/>
            <person name="Leroux M.R."/>
            <person name="Heon E."/>
            <person name="Zhen M."/>
        </authorList>
    </citation>
    <scope>FUNCTION</scope>
    <scope>DISRUPTION PHENOTYPE</scope>
</reference>
<reference key="6">
    <citation type="journal article" date="2012" name="Nat. Cell Biol.">
        <title>The BBSome controls IFT assembly and turnaround in cilia.</title>
        <authorList>
            <person name="Wei Q."/>
            <person name="Zhang Y."/>
            <person name="Li Y."/>
            <person name="Zhang Q."/>
            <person name="Ling K."/>
            <person name="Hu J."/>
        </authorList>
    </citation>
    <scope>FUNCTION</scope>
    <scope>INTERACTION WITH BBS-1</scope>
    <scope>DISRUPTION PHENOTYPE</scope>
</reference>
<reference key="7">
    <citation type="journal article" date="2014" name="J. Cell Sci.">
        <title>Ciliopathy proteins establish a bipartite signaling compartment in a C. elegans thermosensory neuron.</title>
        <authorList>
            <person name="Nguyen P.A."/>
            <person name="Liou W."/>
            <person name="Hall D.H."/>
            <person name="Leroux M.R."/>
        </authorList>
    </citation>
    <scope>FUNCTION</scope>
    <scope>DISRUPTION PHENOTYPE</scope>
</reference>
<reference key="8">
    <citation type="journal article" date="2014" name="PLoS ONE">
        <title>Identification and characterization of a novel allele of Caenorhabditis elegans bbs-7.</title>
        <authorList>
            <person name="Braunreiter K."/>
            <person name="Hamlin S."/>
            <person name="Lyman-Gingerich J."/>
        </authorList>
    </citation>
    <scope>MUTAGENESIS OF GLY-314</scope>
</reference>
<reference key="9">
    <citation type="journal article" date="2015" name="Sci. Rep.">
        <title>BBS4 and BBS5 show functional redundancy in the BBSome to regulate the degradative sorting of ciliary sensory receptors.</title>
        <authorList>
            <person name="Xu Q."/>
            <person name="Zhang Y."/>
            <person name="Wei Q."/>
            <person name="Huang Y."/>
            <person name="Li Y."/>
            <person name="Ling K."/>
            <person name="Hu J."/>
        </authorList>
    </citation>
    <scope>FUNCTION</scope>
    <scope>SUBUNIT</scope>
    <scope>DISRUPTION PHENOTYPE</scope>
</reference>
<reference key="10">
    <citation type="journal article" date="2018" name="Elife">
        <title>Thioredoxin shapes the C. elegans sensory response to Pseudomonas produced nitric oxide.</title>
        <authorList>
            <person name="Hao Y."/>
            <person name="Yang W."/>
            <person name="Ren J."/>
            <person name="Hall Q."/>
            <person name="Zhang Y."/>
            <person name="Kaplan J.M."/>
        </authorList>
    </citation>
    <scope>FUNCTION</scope>
    <scope>MUTAGENESIS OF 233-TRP--ASP-721</scope>
</reference>
<proteinExistence type="evidence at protein level"/>
<feature type="chain" id="PRO_0000434996" description="BBSome complex member bbs-7" evidence="11">
    <location>
        <begin position="1"/>
        <end position="721"/>
    </location>
</feature>
<feature type="mutagenesis site" description="In n1606; results in defective avoidance of nitric oxide and P.aeruginosa." evidence="10">
    <location>
        <begin position="233"/>
        <end position="721"/>
    </location>
</feature>
<feature type="mutagenesis site" description="In my13; results in cilia with structural defects and increased accumulation of the mechanosensory receptor, pkd-2. Mutants may have slightly altered chemotactic tendencies and have vacuoles in amphid sheath cells." evidence="8">
    <original>G</original>
    <variation>E</variation>
    <location>
        <position position="314"/>
    </location>
</feature>
<keyword id="KW-0966">Cell projection</keyword>
<keyword id="KW-0969">Cilium</keyword>
<keyword id="KW-0970">Cilium biogenesis/degradation</keyword>
<keyword id="KW-0963">Cytoplasm</keyword>
<keyword id="KW-0206">Cytoskeleton</keyword>
<keyword id="KW-0653">Protein transport</keyword>
<keyword id="KW-1185">Reference proteome</keyword>
<keyword id="KW-0813">Transport</keyword>
<gene>
    <name evidence="13" type="primary">osm-12</name>
    <name evidence="13" type="synonym">bbs-7</name>
    <name evidence="13" type="ORF">Y75B8A.12</name>
</gene>
<dbReference type="EMBL" id="BX284603">
    <property type="protein sequence ID" value="CAA22100.1"/>
    <property type="molecule type" value="Genomic_DNA"/>
</dbReference>
<dbReference type="PIR" id="T27399">
    <property type="entry name" value="T27399"/>
</dbReference>
<dbReference type="RefSeq" id="NP_499585.1">
    <property type="nucleotide sequence ID" value="NM_067184.3"/>
</dbReference>
<dbReference type="SMR" id="Q9XW70"/>
<dbReference type="ComplexPortal" id="CPX-428">
    <property type="entry name" value="BBSome complex"/>
</dbReference>
<dbReference type="DIP" id="DIP-25936N"/>
<dbReference type="FunCoup" id="Q9XW70">
    <property type="interactions" value="924"/>
</dbReference>
<dbReference type="IntAct" id="Q9XW70">
    <property type="interactions" value="3"/>
</dbReference>
<dbReference type="STRING" id="6239.Y75B8A.12.1"/>
<dbReference type="TCDB" id="3.A.33.1.2">
    <property type="family name" value="the bbsome complex (bbsome) family"/>
</dbReference>
<dbReference type="PaxDb" id="6239-Y75B8A.12"/>
<dbReference type="EnsemblMetazoa" id="Y75B8A.12.1">
    <property type="protein sequence ID" value="Y75B8A.12.1"/>
    <property type="gene ID" value="WBGene00003892"/>
</dbReference>
<dbReference type="GeneID" id="190704"/>
<dbReference type="KEGG" id="cel:CELE_Y75B8A.12"/>
<dbReference type="UCSC" id="Y75B8A.12">
    <property type="organism name" value="c. elegans"/>
</dbReference>
<dbReference type="AGR" id="WB:WBGene00003892"/>
<dbReference type="CTD" id="190704"/>
<dbReference type="WormBase" id="Y75B8A.12">
    <property type="protein sequence ID" value="CE23024"/>
    <property type="gene ID" value="WBGene00003892"/>
    <property type="gene designation" value="osm-12"/>
</dbReference>
<dbReference type="eggNOG" id="ENOG502QPS5">
    <property type="taxonomic scope" value="Eukaryota"/>
</dbReference>
<dbReference type="GeneTree" id="ENSGT00390000012346"/>
<dbReference type="HOGENOM" id="CLU_018704_1_0_1"/>
<dbReference type="InParanoid" id="Q9XW70"/>
<dbReference type="OMA" id="KGEGCFK"/>
<dbReference type="OrthoDB" id="414590at2759"/>
<dbReference type="PhylomeDB" id="Q9XW70"/>
<dbReference type="Reactome" id="R-CEL-5620922">
    <property type="pathway name" value="BBSome-mediated cargo-targeting to cilium"/>
</dbReference>
<dbReference type="PRO" id="PR:Q9XW70"/>
<dbReference type="Proteomes" id="UP000001940">
    <property type="component" value="Chromosome III"/>
</dbReference>
<dbReference type="Bgee" id="WBGene00003892">
    <property type="expression patterns" value="Expressed in pharyngeal muscle cell (C elegans) and 3 other cell types or tissues"/>
</dbReference>
<dbReference type="GO" id="GO:0005930">
    <property type="term" value="C:axoneme"/>
    <property type="evidence" value="ECO:0000318"/>
    <property type="project" value="GO_Central"/>
</dbReference>
<dbReference type="GO" id="GO:0034464">
    <property type="term" value="C:BBSome"/>
    <property type="evidence" value="ECO:0000318"/>
    <property type="project" value="GO_Central"/>
</dbReference>
<dbReference type="GO" id="GO:0036064">
    <property type="term" value="C:ciliary basal body"/>
    <property type="evidence" value="ECO:0000314"/>
    <property type="project" value="MGI"/>
</dbReference>
<dbReference type="GO" id="GO:0005929">
    <property type="term" value="C:cilium"/>
    <property type="evidence" value="ECO:0000303"/>
    <property type="project" value="ComplexPortal"/>
</dbReference>
<dbReference type="GO" id="GO:0016020">
    <property type="term" value="C:membrane"/>
    <property type="evidence" value="ECO:0000318"/>
    <property type="project" value="GO_Central"/>
</dbReference>
<dbReference type="GO" id="GO:0043005">
    <property type="term" value="C:neuron projection"/>
    <property type="evidence" value="ECO:0000314"/>
    <property type="project" value="BHF-UCL"/>
</dbReference>
<dbReference type="GO" id="GO:0097730">
    <property type="term" value="C:non-motile cilium"/>
    <property type="evidence" value="ECO:0000314"/>
    <property type="project" value="WormBase"/>
</dbReference>
<dbReference type="GO" id="GO:0006935">
    <property type="term" value="P:chemotaxis"/>
    <property type="evidence" value="ECO:0000315"/>
    <property type="project" value="WormBase"/>
</dbReference>
<dbReference type="GO" id="GO:0060271">
    <property type="term" value="P:cilium assembly"/>
    <property type="evidence" value="ECO:0000315"/>
    <property type="project" value="WormBase"/>
</dbReference>
<dbReference type="GO" id="GO:0046907">
    <property type="term" value="P:intracellular transport"/>
    <property type="evidence" value="ECO:0000318"/>
    <property type="project" value="GO_Central"/>
</dbReference>
<dbReference type="GO" id="GO:0042073">
    <property type="term" value="P:intraciliary transport"/>
    <property type="evidence" value="ECO:0000315"/>
    <property type="project" value="WormBase"/>
</dbReference>
<dbReference type="GO" id="GO:1905515">
    <property type="term" value="P:non-motile cilium assembly"/>
    <property type="evidence" value="ECO:0000270"/>
    <property type="project" value="BHF-UCL"/>
</dbReference>
<dbReference type="GO" id="GO:0008104">
    <property type="term" value="P:protein localization"/>
    <property type="evidence" value="ECO:0000318"/>
    <property type="project" value="GO_Central"/>
</dbReference>
<dbReference type="GO" id="GO:1904107">
    <property type="term" value="P:protein localization to microvillus membrane"/>
    <property type="evidence" value="ECO:0000315"/>
    <property type="project" value="WormBase"/>
</dbReference>
<dbReference type="GO" id="GO:0015031">
    <property type="term" value="P:protein transport"/>
    <property type="evidence" value="ECO:0007669"/>
    <property type="project" value="UniProtKB-KW"/>
</dbReference>
<dbReference type="InterPro" id="IPR016575">
    <property type="entry name" value="Bardet-Biedl_syndrome_7_prot"/>
</dbReference>
<dbReference type="InterPro" id="IPR056334">
    <property type="entry name" value="BBS7_GAE_dom"/>
</dbReference>
<dbReference type="InterPro" id="IPR056335">
    <property type="entry name" value="BBS7_hairpin"/>
</dbReference>
<dbReference type="InterPro" id="IPR056333">
    <property type="entry name" value="BBS7_pf_dom"/>
</dbReference>
<dbReference type="InterPro" id="IPR056332">
    <property type="entry name" value="Beta-prop_BBS7"/>
</dbReference>
<dbReference type="InterPro" id="IPR011047">
    <property type="entry name" value="Quinoprotein_ADH-like_sf"/>
</dbReference>
<dbReference type="PANTHER" id="PTHR16074">
    <property type="entry name" value="BARDET-BIEDL SYNDROME 7 PROTEIN"/>
    <property type="match status" value="1"/>
</dbReference>
<dbReference type="PANTHER" id="PTHR16074:SF4">
    <property type="entry name" value="BARDET-BIEDL SYNDROME 7 PROTEIN"/>
    <property type="match status" value="1"/>
</dbReference>
<dbReference type="Pfam" id="PF23360">
    <property type="entry name" value="BBS7_GAE"/>
    <property type="match status" value="1"/>
</dbReference>
<dbReference type="Pfam" id="PF23349">
    <property type="entry name" value="BBS7_hp"/>
    <property type="match status" value="1"/>
</dbReference>
<dbReference type="Pfam" id="PF23361">
    <property type="entry name" value="BBS7_pf"/>
    <property type="match status" value="1"/>
</dbReference>
<dbReference type="Pfam" id="PF23743">
    <property type="entry name" value="Beta-prop_BBS7"/>
    <property type="match status" value="1"/>
</dbReference>
<dbReference type="PIRSF" id="PIRSF011091">
    <property type="entry name" value="BBS7"/>
    <property type="match status" value="1"/>
</dbReference>
<dbReference type="SUPFAM" id="SSF50998">
    <property type="entry name" value="Quinoprotein alcohol dehydrogenase-like"/>
    <property type="match status" value="1"/>
</dbReference>
<name>BBS7_CAEEL</name>
<evidence type="ECO:0000250" key="1">
    <source>
        <dbReference type="UniProtKB" id="Q8IWZ6"/>
    </source>
</evidence>
<evidence type="ECO:0000269" key="2">
    <source>
    </source>
</evidence>
<evidence type="ECO:0000269" key="3">
    <source>
    </source>
</evidence>
<evidence type="ECO:0000269" key="4">
    <source>
    </source>
</evidence>
<evidence type="ECO:0000269" key="5">
    <source>
    </source>
</evidence>
<evidence type="ECO:0000269" key="6">
    <source>
    </source>
</evidence>
<evidence type="ECO:0000269" key="7">
    <source>
    </source>
</evidence>
<evidence type="ECO:0000269" key="8">
    <source>
    </source>
</evidence>
<evidence type="ECO:0000269" key="9">
    <source>
    </source>
</evidence>
<evidence type="ECO:0000269" key="10">
    <source>
    </source>
</evidence>
<evidence type="ECO:0000305" key="11"/>
<evidence type="ECO:0000312" key="12">
    <source>
        <dbReference type="Proteomes" id="UP000001940"/>
    </source>
</evidence>
<evidence type="ECO:0000312" key="13">
    <source>
        <dbReference type="WormBase" id="Y75B8A.12"/>
    </source>
</evidence>
<organism evidence="12">
    <name type="scientific">Caenorhabditis elegans</name>
    <dbReference type="NCBI Taxonomy" id="6239"/>
    <lineage>
        <taxon>Eukaryota</taxon>
        <taxon>Metazoa</taxon>
        <taxon>Ecdysozoa</taxon>
        <taxon>Nematoda</taxon>
        <taxon>Chromadorea</taxon>
        <taxon>Rhabditida</taxon>
        <taxon>Rhabditina</taxon>
        <taxon>Rhabditomorpha</taxon>
        <taxon>Rhabditoidea</taxon>
        <taxon>Rhabditidae</taxon>
        <taxon>Peloderinae</taxon>
        <taxon>Caenorhabditis</taxon>
    </lineage>
</organism>